<feature type="chain" id="PRO_0000418203" description="Zinc metalloproteinase-disintegrin-like lachestatin-1">
    <location>
        <begin position="1"/>
        <end position="421"/>
    </location>
</feature>
<feature type="domain" description="Peptidase M12B" evidence="4">
    <location>
        <begin position="10"/>
        <end position="206"/>
    </location>
</feature>
<feature type="domain" description="Disintegrin" evidence="3">
    <location>
        <begin position="214"/>
        <end position="299"/>
    </location>
</feature>
<feature type="short sequence motif" description="D/ECD-tripeptide">
    <location>
        <begin position="278"/>
        <end position="280"/>
    </location>
</feature>
<feature type="active site" evidence="4 5">
    <location>
        <position position="147"/>
    </location>
</feature>
<feature type="binding site" evidence="1">
    <location>
        <position position="146"/>
    </location>
    <ligand>
        <name>Zn(2+)</name>
        <dbReference type="ChEBI" id="CHEBI:29105"/>
        <note>catalytic</note>
    </ligand>
</feature>
<feature type="binding site" evidence="1">
    <location>
        <position position="150"/>
    </location>
    <ligand>
        <name>Zn(2+)</name>
        <dbReference type="ChEBI" id="CHEBI:29105"/>
        <note>catalytic</note>
    </ligand>
</feature>
<feature type="binding site" evidence="1">
    <location>
        <position position="156"/>
    </location>
    <ligand>
        <name>Zn(2+)</name>
        <dbReference type="ChEBI" id="CHEBI:29105"/>
        <note>catalytic</note>
    </ligand>
</feature>
<feature type="binding site" evidence="1">
    <location>
        <position position="216"/>
    </location>
    <ligand>
        <name>Ca(2+)</name>
        <dbReference type="ChEBI" id="CHEBI:29108"/>
        <label>1</label>
    </ligand>
</feature>
<feature type="binding site" evidence="1">
    <location>
        <position position="219"/>
    </location>
    <ligand>
        <name>Ca(2+)</name>
        <dbReference type="ChEBI" id="CHEBI:29108"/>
        <label>1</label>
    </ligand>
</feature>
<feature type="binding site" evidence="1">
    <location>
        <position position="221"/>
    </location>
    <ligand>
        <name>Ca(2+)</name>
        <dbReference type="ChEBI" id="CHEBI:29108"/>
        <label>1</label>
    </ligand>
</feature>
<feature type="binding site" evidence="1">
    <location>
        <position position="223"/>
    </location>
    <ligand>
        <name>Ca(2+)</name>
        <dbReference type="ChEBI" id="CHEBI:29108"/>
        <label>1</label>
    </ligand>
</feature>
<feature type="binding site" evidence="1">
    <location>
        <position position="226"/>
    </location>
    <ligand>
        <name>Ca(2+)</name>
        <dbReference type="ChEBI" id="CHEBI:29108"/>
        <label>1</label>
    </ligand>
</feature>
<feature type="binding site" evidence="1">
    <location>
        <position position="229"/>
    </location>
    <ligand>
        <name>Ca(2+)</name>
        <dbReference type="ChEBI" id="CHEBI:29108"/>
        <label>1</label>
    </ligand>
</feature>
<feature type="binding site" evidence="1">
    <location>
        <position position="280"/>
    </location>
    <ligand>
        <name>Ca(2+)</name>
        <dbReference type="ChEBI" id="CHEBI:29108"/>
        <label>2</label>
    </ligand>
</feature>
<feature type="binding site" evidence="1">
    <location>
        <position position="281"/>
    </location>
    <ligand>
        <name>Ca(2+)</name>
        <dbReference type="ChEBI" id="CHEBI:29108"/>
        <label>2</label>
    </ligand>
</feature>
<feature type="binding site" evidence="1">
    <location>
        <position position="283"/>
    </location>
    <ligand>
        <name>Ca(2+)</name>
        <dbReference type="ChEBI" id="CHEBI:29108"/>
        <label>2</label>
    </ligand>
</feature>
<feature type="binding site" evidence="1">
    <location>
        <position position="294"/>
    </location>
    <ligand>
        <name>Ca(2+)</name>
        <dbReference type="ChEBI" id="CHEBI:29108"/>
        <label>2</label>
    </ligand>
</feature>
<feature type="binding site" evidence="1">
    <location>
        <position position="295"/>
    </location>
    <ligand>
        <name>Ca(2+)</name>
        <dbReference type="ChEBI" id="CHEBI:29108"/>
        <label>2</label>
    </ligand>
</feature>
<feature type="glycosylation site" description="N-linked (GlcNAc...) asparagine" evidence="2">
    <location>
        <position position="312"/>
    </location>
</feature>
<feature type="disulfide bond" evidence="1">
    <location>
        <begin position="121"/>
        <end position="201"/>
    </location>
</feature>
<feature type="disulfide bond" evidence="1">
    <location>
        <begin position="161"/>
        <end position="185"/>
    </location>
</feature>
<feature type="disulfide bond" evidence="1">
    <location>
        <begin position="163"/>
        <end position="168"/>
    </location>
</feature>
<feature type="disulfide bond" description="Interchain (with C-365)" evidence="3 4">
    <location>
        <position position="176"/>
    </location>
</feature>
<feature type="disulfide bond" evidence="1">
    <location>
        <begin position="217"/>
        <end position="246"/>
    </location>
</feature>
<feature type="disulfide bond" evidence="1">
    <location>
        <begin position="228"/>
        <end position="241"/>
    </location>
</feature>
<feature type="disulfide bond" evidence="1">
    <location>
        <begin position="230"/>
        <end position="236"/>
    </location>
</feature>
<feature type="disulfide bond" evidence="1">
    <location>
        <begin position="240"/>
        <end position="263"/>
    </location>
</feature>
<feature type="disulfide bond" evidence="1">
    <location>
        <begin position="254"/>
        <end position="260"/>
    </location>
</feature>
<feature type="disulfide bond" evidence="1">
    <location>
        <begin position="259"/>
        <end position="285"/>
    </location>
</feature>
<feature type="disulfide bond" evidence="1">
    <location>
        <begin position="272"/>
        <end position="292"/>
    </location>
</feature>
<feature type="disulfide bond" evidence="1">
    <location>
        <begin position="279"/>
        <end position="310"/>
    </location>
</feature>
<feature type="disulfide bond" evidence="1">
    <location>
        <begin position="303"/>
        <end position="315"/>
    </location>
</feature>
<feature type="disulfide bond" evidence="1">
    <location>
        <begin position="322"/>
        <end position="372"/>
    </location>
</feature>
<feature type="disulfide bond" evidence="1">
    <location>
        <begin position="337"/>
        <end position="383"/>
    </location>
</feature>
<feature type="disulfide bond" evidence="1">
    <location>
        <begin position="350"/>
        <end position="360"/>
    </location>
</feature>
<feature type="disulfide bond" evidence="1">
    <location>
        <begin position="367"/>
        <end position="409"/>
    </location>
</feature>
<feature type="disulfide bond" evidence="1">
    <location>
        <begin position="403"/>
        <end position="414"/>
    </location>
</feature>
<dbReference type="EC" id="3.4.24.-"/>
<dbReference type="EMBL" id="EU733642">
    <property type="protein sequence ID" value="ACI02290.1"/>
    <property type="molecule type" value="mRNA"/>
</dbReference>
<dbReference type="SMR" id="C5H5D5"/>
<dbReference type="MEROPS" id="M12.315"/>
<dbReference type="GO" id="GO:0005576">
    <property type="term" value="C:extracellular region"/>
    <property type="evidence" value="ECO:0007669"/>
    <property type="project" value="UniProtKB-SubCell"/>
</dbReference>
<dbReference type="GO" id="GO:0005886">
    <property type="term" value="C:plasma membrane"/>
    <property type="evidence" value="ECO:0007669"/>
    <property type="project" value="TreeGrafter"/>
</dbReference>
<dbReference type="GO" id="GO:0046872">
    <property type="term" value="F:metal ion binding"/>
    <property type="evidence" value="ECO:0007669"/>
    <property type="project" value="UniProtKB-KW"/>
</dbReference>
<dbReference type="GO" id="GO:0004222">
    <property type="term" value="F:metalloendopeptidase activity"/>
    <property type="evidence" value="ECO:0007669"/>
    <property type="project" value="InterPro"/>
</dbReference>
<dbReference type="GO" id="GO:0090729">
    <property type="term" value="F:toxin activity"/>
    <property type="evidence" value="ECO:0007669"/>
    <property type="project" value="UniProtKB-KW"/>
</dbReference>
<dbReference type="GO" id="GO:0006915">
    <property type="term" value="P:apoptotic process"/>
    <property type="evidence" value="ECO:0007669"/>
    <property type="project" value="UniProtKB-KW"/>
</dbReference>
<dbReference type="GO" id="GO:0006508">
    <property type="term" value="P:proteolysis"/>
    <property type="evidence" value="ECO:0007669"/>
    <property type="project" value="UniProtKB-KW"/>
</dbReference>
<dbReference type="CDD" id="cd04269">
    <property type="entry name" value="ZnMc_adamalysin_II_like"/>
    <property type="match status" value="1"/>
</dbReference>
<dbReference type="FunFam" id="3.40.390.10:FF:000002">
    <property type="entry name" value="Disintegrin and metalloproteinase domain-containing protein 22"/>
    <property type="match status" value="1"/>
</dbReference>
<dbReference type="FunFam" id="4.10.70.10:FF:000001">
    <property type="entry name" value="Disintegrin and metalloproteinase domain-containing protein 22"/>
    <property type="match status" value="1"/>
</dbReference>
<dbReference type="Gene3D" id="3.40.390.10">
    <property type="entry name" value="Collagenase (Catalytic Domain)"/>
    <property type="match status" value="1"/>
</dbReference>
<dbReference type="Gene3D" id="4.10.70.10">
    <property type="entry name" value="Disintegrin domain"/>
    <property type="match status" value="1"/>
</dbReference>
<dbReference type="InterPro" id="IPR006586">
    <property type="entry name" value="ADAM_Cys-rich"/>
</dbReference>
<dbReference type="InterPro" id="IPR018358">
    <property type="entry name" value="Disintegrin_CS"/>
</dbReference>
<dbReference type="InterPro" id="IPR001762">
    <property type="entry name" value="Disintegrin_dom"/>
</dbReference>
<dbReference type="InterPro" id="IPR036436">
    <property type="entry name" value="Disintegrin_dom_sf"/>
</dbReference>
<dbReference type="InterPro" id="IPR024079">
    <property type="entry name" value="MetalloPept_cat_dom_sf"/>
</dbReference>
<dbReference type="InterPro" id="IPR001590">
    <property type="entry name" value="Peptidase_M12B"/>
</dbReference>
<dbReference type="InterPro" id="IPR034027">
    <property type="entry name" value="Reprolysin_adamalysin"/>
</dbReference>
<dbReference type="PANTHER" id="PTHR11905">
    <property type="entry name" value="ADAM A DISINTEGRIN AND METALLOPROTEASE DOMAIN"/>
    <property type="match status" value="1"/>
</dbReference>
<dbReference type="PANTHER" id="PTHR11905:SF32">
    <property type="entry name" value="DISINTEGRIN AND METALLOPROTEINASE DOMAIN-CONTAINING PROTEIN 28"/>
    <property type="match status" value="1"/>
</dbReference>
<dbReference type="Pfam" id="PF08516">
    <property type="entry name" value="ADAM_CR"/>
    <property type="match status" value="1"/>
</dbReference>
<dbReference type="Pfam" id="PF00200">
    <property type="entry name" value="Disintegrin"/>
    <property type="match status" value="1"/>
</dbReference>
<dbReference type="Pfam" id="PF01421">
    <property type="entry name" value="Reprolysin"/>
    <property type="match status" value="1"/>
</dbReference>
<dbReference type="PRINTS" id="PR00289">
    <property type="entry name" value="DISINTEGRIN"/>
</dbReference>
<dbReference type="SMART" id="SM00608">
    <property type="entry name" value="ACR"/>
    <property type="match status" value="1"/>
</dbReference>
<dbReference type="SMART" id="SM00050">
    <property type="entry name" value="DISIN"/>
    <property type="match status" value="1"/>
</dbReference>
<dbReference type="SUPFAM" id="SSF57552">
    <property type="entry name" value="Blood coagulation inhibitor (disintegrin)"/>
    <property type="match status" value="1"/>
</dbReference>
<dbReference type="SUPFAM" id="SSF55486">
    <property type="entry name" value="Metalloproteases ('zincins'), catalytic domain"/>
    <property type="match status" value="1"/>
</dbReference>
<dbReference type="PROSITE" id="PS50215">
    <property type="entry name" value="ADAM_MEPRO"/>
    <property type="match status" value="1"/>
</dbReference>
<dbReference type="PROSITE" id="PS00427">
    <property type="entry name" value="DISINTEGRIN_1"/>
    <property type="match status" value="1"/>
</dbReference>
<dbReference type="PROSITE" id="PS50214">
    <property type="entry name" value="DISINTEGRIN_2"/>
    <property type="match status" value="1"/>
</dbReference>
<dbReference type="PROSITE" id="PS00142">
    <property type="entry name" value="ZINC_PROTEASE"/>
    <property type="match status" value="1"/>
</dbReference>
<reference key="1">
    <citation type="journal article" date="2008" name="Toxicon">
        <title>Expression of mRNAs coding for VAP1/crotastatin-like metalloproteases in the venom glands of three South American pit vipers assessed by quantitative real-time PCR.</title>
        <authorList>
            <person name="Tavares N.A.C."/>
            <person name="Correia J.M."/>
            <person name="Guarnieri M.C."/>
            <person name="Lima-Filho J.L."/>
            <person name="Prieto-da-Silva A.R.B."/>
            <person name="Radis-Baptista G."/>
        </authorList>
    </citation>
    <scope>NUCLEOTIDE SEQUENCE [MRNA]</scope>
    <source>
        <tissue>Venom gland</tissue>
    </source>
</reference>
<proteinExistence type="evidence at transcript level"/>
<evidence type="ECO:0000250" key="1"/>
<evidence type="ECO:0000255" key="2"/>
<evidence type="ECO:0000255" key="3">
    <source>
        <dbReference type="PROSITE-ProRule" id="PRU00068"/>
    </source>
</evidence>
<evidence type="ECO:0000255" key="4">
    <source>
        <dbReference type="PROSITE-ProRule" id="PRU00276"/>
    </source>
</evidence>
<evidence type="ECO:0000255" key="5">
    <source>
        <dbReference type="PROSITE-ProRule" id="PRU10095"/>
    </source>
</evidence>
<evidence type="ECO:0000305" key="6"/>
<accession>C5H5D5</accession>
<organism>
    <name type="scientific">Lachesis muta rhombeata</name>
    <name type="common">Bushmaster</name>
    <dbReference type="NCBI Taxonomy" id="60219"/>
    <lineage>
        <taxon>Eukaryota</taxon>
        <taxon>Metazoa</taxon>
        <taxon>Chordata</taxon>
        <taxon>Craniata</taxon>
        <taxon>Vertebrata</taxon>
        <taxon>Euteleostomi</taxon>
        <taxon>Lepidosauria</taxon>
        <taxon>Squamata</taxon>
        <taxon>Bifurcata</taxon>
        <taxon>Unidentata</taxon>
        <taxon>Episquamata</taxon>
        <taxon>Toxicofera</taxon>
        <taxon>Serpentes</taxon>
        <taxon>Colubroidea</taxon>
        <taxon>Viperidae</taxon>
        <taxon>Crotalinae</taxon>
        <taxon>Lachesis</taxon>
    </lineage>
</organism>
<keyword id="KW-0053">Apoptosis</keyword>
<keyword id="KW-0106">Calcium</keyword>
<keyword id="KW-1217">Cell adhesion impairing toxin</keyword>
<keyword id="KW-1015">Disulfide bond</keyword>
<keyword id="KW-1206">Fibrinogenolytic toxin</keyword>
<keyword id="KW-0325">Glycoprotein</keyword>
<keyword id="KW-1200">Hemorrhagic toxin</keyword>
<keyword id="KW-1199">Hemostasis impairing toxin</keyword>
<keyword id="KW-0378">Hydrolase</keyword>
<keyword id="KW-0479">Metal-binding</keyword>
<keyword id="KW-0482">Metalloprotease</keyword>
<keyword id="KW-0645">Protease</keyword>
<keyword id="KW-0964">Secreted</keyword>
<keyword id="KW-0800">Toxin</keyword>
<keyword id="KW-0862">Zinc</keyword>
<name>VM31_LACMR</name>
<comment type="function">
    <text evidence="1">Snake venom zinc metalloprotease that induces apoptosis in vascular endothelial cells (VEC), without degrading the extracellular matrix (it cannot cleave collagen) or inhibiting adhesion of VEC. Has also fibrinogenolytic and hemorrhagic activities (By similarity).</text>
</comment>
<comment type="cofactor">
    <cofactor evidence="1">
        <name>Zn(2+)</name>
        <dbReference type="ChEBI" id="CHEBI:29105"/>
    </cofactor>
    <text evidence="1">Binds 1 zinc ion per subunit.</text>
</comment>
<comment type="subunit">
    <text evidence="1">Homodimer; disulfide-linked.</text>
</comment>
<comment type="subcellular location">
    <subcellularLocation>
        <location evidence="1">Secreted</location>
    </subcellularLocation>
</comment>
<comment type="tissue specificity">
    <text>Expressed by the venom gland.</text>
</comment>
<comment type="similarity">
    <text evidence="6">Belongs to the venom metalloproteinase (M12B) family. P-III subfamily. P-IIIc sub-subfamily.</text>
</comment>
<protein>
    <recommendedName>
        <fullName>Zinc metalloproteinase-disintegrin-like lachestatin-1</fullName>
        <ecNumber>3.4.24.-</ecNumber>
    </recommendedName>
    <alternativeName>
        <fullName>Snake venom metalloprotease</fullName>
        <shortName>SVMP</shortName>
    </alternativeName>
    <alternativeName>
        <fullName>Vascular apoptosis-inducing protein-like</fullName>
        <shortName>VAP-like</shortName>
    </alternativeName>
</protein>
<sequence length="421" mass="46799">EQQRYLNAKKYVKLVLVADYIMYLKYGRSLTTLRTRMYDIVNIINLIFQRMNIHVALVGLEIWSNRDKIIVQSSADVTLDLFAKWRETDLLKRKSHDNAQLLTGINFNGPTAGLAYLSGICKPMYSAGIVQDHNKVHHLVAIAMAHEMGHNLGMDHDKDTCTCGARSCVMAGTLSCEPSYLFSDCSRREHRAFLIKDMPQCILEKPLRTDVVSPPVCGNYFVEVGEECDCGFSATCRDTCCDAATCKLRQGAQCAEGLCCDQCRFKGAGTECRAAKDECDMADLCTGRSAECTDRFQRNGQPCQNNNGYCYNGTCPIMRDQCIALFGPNAAVSQDACFQFNLQGNHYGYCRKEQNTKIACEPQDVKCGRLYCFPSSPATKNPCNIHYSPNDEDKGMVLPGTKCADGKACSNGRCVDVNTPY</sequence>